<gene>
    <name evidence="1" type="primary">atpA</name>
    <name type="ordered locus">BCE33L5007</name>
</gene>
<protein>
    <recommendedName>
        <fullName evidence="1">ATP synthase subunit alpha</fullName>
        <ecNumber evidence="1">7.1.2.2</ecNumber>
    </recommendedName>
    <alternativeName>
        <fullName evidence="1">ATP synthase F1 sector subunit alpha</fullName>
    </alternativeName>
    <alternativeName>
        <fullName evidence="1">F-ATPase subunit alpha</fullName>
    </alternativeName>
</protein>
<reference key="1">
    <citation type="journal article" date="2006" name="J. Bacteriol.">
        <title>Pathogenomic sequence analysis of Bacillus cereus and Bacillus thuringiensis isolates closely related to Bacillus anthracis.</title>
        <authorList>
            <person name="Han C.S."/>
            <person name="Xie G."/>
            <person name="Challacombe J.F."/>
            <person name="Altherr M.R."/>
            <person name="Bhotika S.S."/>
            <person name="Bruce D."/>
            <person name="Campbell C.S."/>
            <person name="Campbell M.L."/>
            <person name="Chen J."/>
            <person name="Chertkov O."/>
            <person name="Cleland C."/>
            <person name="Dimitrijevic M."/>
            <person name="Doggett N.A."/>
            <person name="Fawcett J.J."/>
            <person name="Glavina T."/>
            <person name="Goodwin L.A."/>
            <person name="Hill K.K."/>
            <person name="Hitchcock P."/>
            <person name="Jackson P.J."/>
            <person name="Keim P."/>
            <person name="Kewalramani A.R."/>
            <person name="Longmire J."/>
            <person name="Lucas S."/>
            <person name="Malfatti S."/>
            <person name="McMurry K."/>
            <person name="Meincke L.J."/>
            <person name="Misra M."/>
            <person name="Moseman B.L."/>
            <person name="Mundt M."/>
            <person name="Munk A.C."/>
            <person name="Okinaka R.T."/>
            <person name="Parson-Quintana B."/>
            <person name="Reilly L.P."/>
            <person name="Richardson P."/>
            <person name="Robinson D.L."/>
            <person name="Rubin E."/>
            <person name="Saunders E."/>
            <person name="Tapia R."/>
            <person name="Tesmer J.G."/>
            <person name="Thayer N."/>
            <person name="Thompson L.S."/>
            <person name="Tice H."/>
            <person name="Ticknor L.O."/>
            <person name="Wills P.L."/>
            <person name="Brettin T.S."/>
            <person name="Gilna P."/>
        </authorList>
    </citation>
    <scope>NUCLEOTIDE SEQUENCE [LARGE SCALE GENOMIC DNA]</scope>
    <source>
        <strain>ZK / E33L</strain>
    </source>
</reference>
<comment type="function">
    <text evidence="1">Produces ATP from ADP in the presence of a proton gradient across the membrane. The alpha chain is a regulatory subunit.</text>
</comment>
<comment type="catalytic activity">
    <reaction evidence="1">
        <text>ATP + H2O + 4 H(+)(in) = ADP + phosphate + 5 H(+)(out)</text>
        <dbReference type="Rhea" id="RHEA:57720"/>
        <dbReference type="ChEBI" id="CHEBI:15377"/>
        <dbReference type="ChEBI" id="CHEBI:15378"/>
        <dbReference type="ChEBI" id="CHEBI:30616"/>
        <dbReference type="ChEBI" id="CHEBI:43474"/>
        <dbReference type="ChEBI" id="CHEBI:456216"/>
        <dbReference type="EC" id="7.1.2.2"/>
    </reaction>
</comment>
<comment type="subunit">
    <text evidence="1">F-type ATPases have 2 components, CF(1) - the catalytic core - and CF(0) - the membrane proton channel. CF(1) has five subunits: alpha(3), beta(3), gamma(1), delta(1), epsilon(1). CF(0) has three main subunits: a(1), b(2) and c(9-12). The alpha and beta chains form an alternating ring which encloses part of the gamma chain. CF(1) is attached to CF(0) by a central stalk formed by the gamma and epsilon chains, while a peripheral stalk is formed by the delta and b chains.</text>
</comment>
<comment type="subcellular location">
    <subcellularLocation>
        <location evidence="1">Cell membrane</location>
        <topology evidence="1">Peripheral membrane protein</topology>
    </subcellularLocation>
</comment>
<comment type="similarity">
    <text evidence="1">Belongs to the ATPase alpha/beta chains family.</text>
</comment>
<feature type="chain" id="PRO_0000238195" description="ATP synthase subunit alpha">
    <location>
        <begin position="1"/>
        <end position="502"/>
    </location>
</feature>
<feature type="region of interest" description="Disordered" evidence="2">
    <location>
        <begin position="115"/>
        <end position="135"/>
    </location>
</feature>
<feature type="binding site" evidence="1">
    <location>
        <begin position="169"/>
        <end position="176"/>
    </location>
    <ligand>
        <name>ATP</name>
        <dbReference type="ChEBI" id="CHEBI:30616"/>
    </ligand>
</feature>
<feature type="site" description="Required for activity" evidence="1">
    <location>
        <position position="362"/>
    </location>
</feature>
<sequence length="502" mass="54643">MSIRAEEISALIKQQIENYQSEIEVSDVGTVIQVGDGIARAHGLDNVMAGELVEFSNGVMGLAQNLEENNVGIIILGPYTEIREGDEVRRTGRIMQVPVGKELIGRVVNPLGQPVDGLGPINTTNTRPIESPAPGVMDRKSVHEPLQTGIKAIDALVPIGRGQRELIIGDRQTGKTAVALDTIINQKDEDMICIYVAIGQKESTVRNVVETLRKHGALEYTIVVTASASQPAPLLYLAPYAGVTMGEEFMYNGKHVLVVYDDLSKQAAAYRELSLLLRRPPGREAYPGDVFYLHSRLLERAAKLSDAKGGGSLTALPFIETQAGDVSAYIPTNVISITDGQIFLQSDLFFSGVRPAIDAGTSVSRVGGSAQIKAMSKVSGTLRLDLASYRELEAFAQFGSDLDKATQAKLNRGARTVEVLKQGLHKPLRVEKQVIILYALTRGFLDDIPVVDITRFEEEFHAWLDSNATDLLEEIRTTKKLADDDKFAAAINGFKKVFVASE</sequence>
<accession>Q630U1</accession>
<proteinExistence type="inferred from homology"/>
<keyword id="KW-0066">ATP synthesis</keyword>
<keyword id="KW-0067">ATP-binding</keyword>
<keyword id="KW-1003">Cell membrane</keyword>
<keyword id="KW-0139">CF(1)</keyword>
<keyword id="KW-0375">Hydrogen ion transport</keyword>
<keyword id="KW-0406">Ion transport</keyword>
<keyword id="KW-0472">Membrane</keyword>
<keyword id="KW-0547">Nucleotide-binding</keyword>
<keyword id="KW-1278">Translocase</keyword>
<keyword id="KW-0813">Transport</keyword>
<name>ATPA_BACCZ</name>
<evidence type="ECO:0000255" key="1">
    <source>
        <dbReference type="HAMAP-Rule" id="MF_01346"/>
    </source>
</evidence>
<evidence type="ECO:0000256" key="2">
    <source>
        <dbReference type="SAM" id="MobiDB-lite"/>
    </source>
</evidence>
<organism>
    <name type="scientific">Bacillus cereus (strain ZK / E33L)</name>
    <dbReference type="NCBI Taxonomy" id="288681"/>
    <lineage>
        <taxon>Bacteria</taxon>
        <taxon>Bacillati</taxon>
        <taxon>Bacillota</taxon>
        <taxon>Bacilli</taxon>
        <taxon>Bacillales</taxon>
        <taxon>Bacillaceae</taxon>
        <taxon>Bacillus</taxon>
        <taxon>Bacillus cereus group</taxon>
    </lineage>
</organism>
<dbReference type="EC" id="7.1.2.2" evidence="1"/>
<dbReference type="EMBL" id="CP000001">
    <property type="protein sequence ID" value="AAU15273.1"/>
    <property type="molecule type" value="Genomic_DNA"/>
</dbReference>
<dbReference type="RefSeq" id="WP_000027518.1">
    <property type="nucleotide sequence ID" value="NZ_CP009968.1"/>
</dbReference>
<dbReference type="SMR" id="Q630U1"/>
<dbReference type="GeneID" id="93005816"/>
<dbReference type="KEGG" id="bcz:BCE33L5007"/>
<dbReference type="PATRIC" id="fig|288681.22.peg.339"/>
<dbReference type="Proteomes" id="UP000002612">
    <property type="component" value="Chromosome"/>
</dbReference>
<dbReference type="GO" id="GO:0005886">
    <property type="term" value="C:plasma membrane"/>
    <property type="evidence" value="ECO:0007669"/>
    <property type="project" value="UniProtKB-SubCell"/>
</dbReference>
<dbReference type="GO" id="GO:0045259">
    <property type="term" value="C:proton-transporting ATP synthase complex"/>
    <property type="evidence" value="ECO:0007669"/>
    <property type="project" value="UniProtKB-KW"/>
</dbReference>
<dbReference type="GO" id="GO:0043531">
    <property type="term" value="F:ADP binding"/>
    <property type="evidence" value="ECO:0007669"/>
    <property type="project" value="TreeGrafter"/>
</dbReference>
<dbReference type="GO" id="GO:0005524">
    <property type="term" value="F:ATP binding"/>
    <property type="evidence" value="ECO:0007669"/>
    <property type="project" value="UniProtKB-UniRule"/>
</dbReference>
<dbReference type="GO" id="GO:0046933">
    <property type="term" value="F:proton-transporting ATP synthase activity, rotational mechanism"/>
    <property type="evidence" value="ECO:0007669"/>
    <property type="project" value="UniProtKB-UniRule"/>
</dbReference>
<dbReference type="CDD" id="cd18113">
    <property type="entry name" value="ATP-synt_F1_alpha_C"/>
    <property type="match status" value="1"/>
</dbReference>
<dbReference type="CDD" id="cd18116">
    <property type="entry name" value="ATP-synt_F1_alpha_N"/>
    <property type="match status" value="1"/>
</dbReference>
<dbReference type="CDD" id="cd01132">
    <property type="entry name" value="F1-ATPase_alpha_CD"/>
    <property type="match status" value="1"/>
</dbReference>
<dbReference type="FunFam" id="1.20.150.20:FF:000001">
    <property type="entry name" value="ATP synthase subunit alpha"/>
    <property type="match status" value="1"/>
</dbReference>
<dbReference type="FunFam" id="2.40.30.20:FF:000001">
    <property type="entry name" value="ATP synthase subunit alpha"/>
    <property type="match status" value="1"/>
</dbReference>
<dbReference type="FunFam" id="3.40.50.300:FF:000002">
    <property type="entry name" value="ATP synthase subunit alpha"/>
    <property type="match status" value="1"/>
</dbReference>
<dbReference type="Gene3D" id="2.40.30.20">
    <property type="match status" value="1"/>
</dbReference>
<dbReference type="Gene3D" id="1.20.150.20">
    <property type="entry name" value="ATP synthase alpha/beta chain, C-terminal domain"/>
    <property type="match status" value="1"/>
</dbReference>
<dbReference type="Gene3D" id="3.40.50.300">
    <property type="entry name" value="P-loop containing nucleotide triphosphate hydrolases"/>
    <property type="match status" value="1"/>
</dbReference>
<dbReference type="HAMAP" id="MF_01346">
    <property type="entry name" value="ATP_synth_alpha_bact"/>
    <property type="match status" value="1"/>
</dbReference>
<dbReference type="InterPro" id="IPR023366">
    <property type="entry name" value="ATP_synth_asu-like_sf"/>
</dbReference>
<dbReference type="InterPro" id="IPR000793">
    <property type="entry name" value="ATP_synth_asu_C"/>
</dbReference>
<dbReference type="InterPro" id="IPR038376">
    <property type="entry name" value="ATP_synth_asu_C_sf"/>
</dbReference>
<dbReference type="InterPro" id="IPR033732">
    <property type="entry name" value="ATP_synth_F1_a_nt-bd_dom"/>
</dbReference>
<dbReference type="InterPro" id="IPR005294">
    <property type="entry name" value="ATP_synth_F1_asu"/>
</dbReference>
<dbReference type="InterPro" id="IPR020003">
    <property type="entry name" value="ATPase_a/bsu_AS"/>
</dbReference>
<dbReference type="InterPro" id="IPR004100">
    <property type="entry name" value="ATPase_F1/V1/A1_a/bsu_N"/>
</dbReference>
<dbReference type="InterPro" id="IPR036121">
    <property type="entry name" value="ATPase_F1/V1/A1_a/bsu_N_sf"/>
</dbReference>
<dbReference type="InterPro" id="IPR000194">
    <property type="entry name" value="ATPase_F1/V1/A1_a/bsu_nucl-bd"/>
</dbReference>
<dbReference type="InterPro" id="IPR027417">
    <property type="entry name" value="P-loop_NTPase"/>
</dbReference>
<dbReference type="NCBIfam" id="TIGR00962">
    <property type="entry name" value="atpA"/>
    <property type="match status" value="1"/>
</dbReference>
<dbReference type="NCBIfam" id="NF009884">
    <property type="entry name" value="PRK13343.1"/>
    <property type="match status" value="1"/>
</dbReference>
<dbReference type="PANTHER" id="PTHR48082">
    <property type="entry name" value="ATP SYNTHASE SUBUNIT ALPHA, MITOCHONDRIAL"/>
    <property type="match status" value="1"/>
</dbReference>
<dbReference type="PANTHER" id="PTHR48082:SF2">
    <property type="entry name" value="ATP SYNTHASE SUBUNIT ALPHA, MITOCHONDRIAL"/>
    <property type="match status" value="1"/>
</dbReference>
<dbReference type="Pfam" id="PF00006">
    <property type="entry name" value="ATP-synt_ab"/>
    <property type="match status" value="1"/>
</dbReference>
<dbReference type="Pfam" id="PF00306">
    <property type="entry name" value="ATP-synt_ab_C"/>
    <property type="match status" value="1"/>
</dbReference>
<dbReference type="Pfam" id="PF02874">
    <property type="entry name" value="ATP-synt_ab_N"/>
    <property type="match status" value="1"/>
</dbReference>
<dbReference type="PIRSF" id="PIRSF039088">
    <property type="entry name" value="F_ATPase_subunit_alpha"/>
    <property type="match status" value="1"/>
</dbReference>
<dbReference type="SUPFAM" id="SSF47917">
    <property type="entry name" value="C-terminal domain of alpha and beta subunits of F1 ATP synthase"/>
    <property type="match status" value="1"/>
</dbReference>
<dbReference type="SUPFAM" id="SSF50615">
    <property type="entry name" value="N-terminal domain of alpha and beta subunits of F1 ATP synthase"/>
    <property type="match status" value="1"/>
</dbReference>
<dbReference type="SUPFAM" id="SSF52540">
    <property type="entry name" value="P-loop containing nucleoside triphosphate hydrolases"/>
    <property type="match status" value="1"/>
</dbReference>
<dbReference type="PROSITE" id="PS00152">
    <property type="entry name" value="ATPASE_ALPHA_BETA"/>
    <property type="match status" value="1"/>
</dbReference>